<evidence type="ECO:0000255" key="1">
    <source>
        <dbReference type="HAMAP-Rule" id="MF_00230"/>
    </source>
</evidence>
<gene>
    <name evidence="1" type="primary">cobT</name>
    <name type="ordered locus">ECIAI1_2072</name>
</gene>
<organism>
    <name type="scientific">Escherichia coli O8 (strain IAI1)</name>
    <dbReference type="NCBI Taxonomy" id="585034"/>
    <lineage>
        <taxon>Bacteria</taxon>
        <taxon>Pseudomonadati</taxon>
        <taxon>Pseudomonadota</taxon>
        <taxon>Gammaproteobacteria</taxon>
        <taxon>Enterobacterales</taxon>
        <taxon>Enterobacteriaceae</taxon>
        <taxon>Escherichia</taxon>
    </lineage>
</organism>
<feature type="chain" id="PRO_1000118964" description="Nicotinate-nucleotide--dimethylbenzimidazole phosphoribosyltransferase">
    <location>
        <begin position="1"/>
        <end position="359"/>
    </location>
</feature>
<feature type="active site" description="Proton acceptor" evidence="1">
    <location>
        <position position="318"/>
    </location>
</feature>
<proteinExistence type="inferred from homology"/>
<reference key="1">
    <citation type="journal article" date="2009" name="PLoS Genet.">
        <title>Organised genome dynamics in the Escherichia coli species results in highly diverse adaptive paths.</title>
        <authorList>
            <person name="Touchon M."/>
            <person name="Hoede C."/>
            <person name="Tenaillon O."/>
            <person name="Barbe V."/>
            <person name="Baeriswyl S."/>
            <person name="Bidet P."/>
            <person name="Bingen E."/>
            <person name="Bonacorsi S."/>
            <person name="Bouchier C."/>
            <person name="Bouvet O."/>
            <person name="Calteau A."/>
            <person name="Chiapello H."/>
            <person name="Clermont O."/>
            <person name="Cruveiller S."/>
            <person name="Danchin A."/>
            <person name="Diard M."/>
            <person name="Dossat C."/>
            <person name="Karoui M.E."/>
            <person name="Frapy E."/>
            <person name="Garry L."/>
            <person name="Ghigo J.M."/>
            <person name="Gilles A.M."/>
            <person name="Johnson J."/>
            <person name="Le Bouguenec C."/>
            <person name="Lescat M."/>
            <person name="Mangenot S."/>
            <person name="Martinez-Jehanne V."/>
            <person name="Matic I."/>
            <person name="Nassif X."/>
            <person name="Oztas S."/>
            <person name="Petit M.A."/>
            <person name="Pichon C."/>
            <person name="Rouy Z."/>
            <person name="Ruf C.S."/>
            <person name="Schneider D."/>
            <person name="Tourret J."/>
            <person name="Vacherie B."/>
            <person name="Vallenet D."/>
            <person name="Medigue C."/>
            <person name="Rocha E.P.C."/>
            <person name="Denamur E."/>
        </authorList>
    </citation>
    <scope>NUCLEOTIDE SEQUENCE [LARGE SCALE GENOMIC DNA]</scope>
    <source>
        <strain>IAI1</strain>
    </source>
</reference>
<protein>
    <recommendedName>
        <fullName evidence="1">Nicotinate-nucleotide--dimethylbenzimidazole phosphoribosyltransferase</fullName>
        <shortName evidence="1">NN:DBI PRT</shortName>
        <ecNumber evidence="1">2.4.2.21</ecNumber>
    </recommendedName>
    <alternativeName>
        <fullName evidence="1">N(1)-alpha-phosphoribosyltransferase</fullName>
    </alternativeName>
</protein>
<sequence>MQTLADLLNTIPAIDPAAMSRAQRHIDGLLKPVGSLGRLEALAIQLAGMPGLNGIPHVGKKAVLVMCADHGVWEEGVAISPKEVTAIQAENMTRGTTGVCVLAAQAGANVHVIDVGIDTAEPIPGLINMRVARGSGNIASAPAMSRRQAVKLLLDVICYTRELAKNGVTLFGVGELGMANTTPAAAIVSTITGRAPEEVVGIGANLPTDKLANKIDVVRRAITLNQPNPQDGVDVLAKVGGFDLVGMAGVMLGAASCGLPVLLDGFLSYAAALAACQMSPAIKPYLIPSHLSAEKGARIALSHLGLEPYLNMEMRLGEGSGAALAMPIIEAACAIYNNMGELAASNIVLPGNTTSDLNS</sequence>
<dbReference type="EC" id="2.4.2.21" evidence="1"/>
<dbReference type="EMBL" id="CU928160">
    <property type="protein sequence ID" value="CAQ98920.1"/>
    <property type="molecule type" value="Genomic_DNA"/>
</dbReference>
<dbReference type="RefSeq" id="WP_001193777.1">
    <property type="nucleotide sequence ID" value="NC_011741.1"/>
</dbReference>
<dbReference type="SMR" id="B7M3C7"/>
<dbReference type="KEGG" id="ecr:ECIAI1_2072"/>
<dbReference type="HOGENOM" id="CLU_002982_0_0_6"/>
<dbReference type="UniPathway" id="UPA00061">
    <property type="reaction ID" value="UER00516"/>
</dbReference>
<dbReference type="GO" id="GO:0008939">
    <property type="term" value="F:nicotinate-nucleotide-dimethylbenzimidazole phosphoribosyltransferase activity"/>
    <property type="evidence" value="ECO:0007669"/>
    <property type="project" value="UniProtKB-UniRule"/>
</dbReference>
<dbReference type="GO" id="GO:0009236">
    <property type="term" value="P:cobalamin biosynthetic process"/>
    <property type="evidence" value="ECO:0007669"/>
    <property type="project" value="UniProtKB-KW"/>
</dbReference>
<dbReference type="CDD" id="cd02439">
    <property type="entry name" value="DMB-PRT_CobT"/>
    <property type="match status" value="1"/>
</dbReference>
<dbReference type="FunFam" id="1.10.1610.10:FF:000001">
    <property type="entry name" value="Nicotinate-nucleotide--dimethylbenzimidazole phosphoribosyltransferase"/>
    <property type="match status" value="1"/>
</dbReference>
<dbReference type="FunFam" id="3.40.50.10210:FF:000001">
    <property type="entry name" value="Nicotinate-nucleotide--dimethylbenzimidazole phosphoribosyltransferase"/>
    <property type="match status" value="1"/>
</dbReference>
<dbReference type="Gene3D" id="1.10.1610.10">
    <property type="match status" value="1"/>
</dbReference>
<dbReference type="Gene3D" id="3.40.50.10210">
    <property type="match status" value="1"/>
</dbReference>
<dbReference type="HAMAP" id="MF_00230">
    <property type="entry name" value="CobT"/>
    <property type="match status" value="1"/>
</dbReference>
<dbReference type="InterPro" id="IPR003200">
    <property type="entry name" value="Nict_dMeBzImd_PRibTrfase"/>
</dbReference>
<dbReference type="InterPro" id="IPR017846">
    <property type="entry name" value="Nict_dMeBzImd_PRibTrfase_bact"/>
</dbReference>
<dbReference type="InterPro" id="IPR023195">
    <property type="entry name" value="Nict_dMeBzImd_PRibTrfase_N"/>
</dbReference>
<dbReference type="InterPro" id="IPR036087">
    <property type="entry name" value="Nict_dMeBzImd_PRibTrfase_sf"/>
</dbReference>
<dbReference type="NCBIfam" id="TIGR03160">
    <property type="entry name" value="cobT_DBIPRT"/>
    <property type="match status" value="1"/>
</dbReference>
<dbReference type="NCBIfam" id="NF000996">
    <property type="entry name" value="PRK00105.1"/>
    <property type="match status" value="1"/>
</dbReference>
<dbReference type="PANTHER" id="PTHR43463">
    <property type="entry name" value="NICOTINATE-NUCLEOTIDE--DIMETHYLBENZIMIDAZOLE PHOSPHORIBOSYLTRANSFERASE"/>
    <property type="match status" value="1"/>
</dbReference>
<dbReference type="PANTHER" id="PTHR43463:SF1">
    <property type="entry name" value="NICOTINATE-NUCLEOTIDE--DIMETHYLBENZIMIDAZOLE PHOSPHORIBOSYLTRANSFERASE"/>
    <property type="match status" value="1"/>
</dbReference>
<dbReference type="Pfam" id="PF02277">
    <property type="entry name" value="DBI_PRT"/>
    <property type="match status" value="1"/>
</dbReference>
<dbReference type="SUPFAM" id="SSF52733">
    <property type="entry name" value="Nicotinate mononucleotide:5,6-dimethylbenzimidazole phosphoribosyltransferase (CobT)"/>
    <property type="match status" value="1"/>
</dbReference>
<keyword id="KW-0169">Cobalamin biosynthesis</keyword>
<keyword id="KW-0328">Glycosyltransferase</keyword>
<keyword id="KW-0808">Transferase</keyword>
<accession>B7M3C7</accession>
<comment type="function">
    <text evidence="1">Catalyzes the synthesis of alpha-ribazole-5'-phosphate from nicotinate mononucleotide (NAMN) and 5,6-dimethylbenzimidazole (DMB).</text>
</comment>
<comment type="catalytic activity">
    <reaction evidence="1">
        <text>5,6-dimethylbenzimidazole + nicotinate beta-D-ribonucleotide = alpha-ribazole 5'-phosphate + nicotinate + H(+)</text>
        <dbReference type="Rhea" id="RHEA:11196"/>
        <dbReference type="ChEBI" id="CHEBI:15378"/>
        <dbReference type="ChEBI" id="CHEBI:15890"/>
        <dbReference type="ChEBI" id="CHEBI:32544"/>
        <dbReference type="ChEBI" id="CHEBI:57502"/>
        <dbReference type="ChEBI" id="CHEBI:57918"/>
        <dbReference type="EC" id="2.4.2.21"/>
    </reaction>
</comment>
<comment type="pathway">
    <text evidence="1">Nucleoside biosynthesis; alpha-ribazole biosynthesis; alpha-ribazole from 5,6-dimethylbenzimidazole: step 1/2.</text>
</comment>
<comment type="subunit">
    <text evidence="1">Homodimer.</text>
</comment>
<comment type="similarity">
    <text evidence="1">Belongs to the CobT family.</text>
</comment>
<name>COBT_ECO8A</name>